<accession>B7N5L9</accession>
<sequence>MFEIHPVKKVSVVIPVYNEQESLPELIRRTTKACESLGKEYEILLIDDGSSDNSAHMLVEASQAENSHIVSILLNRNYGQHSAIMAGFSHVTGDLIITLDADLQNPPEEIPRLVAKADEGYDVVGTVRQNRQDSWFRKTASKMINRLIQRTTGKAMGDYGCMLRAYRRHIVDAMLHCHERSTFIPILANIFARRAIEIPVHHAEREFGESKYSFMRLINLMYDLVTCLTTTPLRMLSLLGSIIAIGGFSIAVLLVILRLTFGPQWAAEGVFMLFAVLFTFIGAQFIGMGLLGEYIGRIYTDVRARPRYFVQQVIRPSSKENE</sequence>
<keyword id="KW-0046">Antibiotic resistance</keyword>
<keyword id="KW-0997">Cell inner membrane</keyword>
<keyword id="KW-1003">Cell membrane</keyword>
<keyword id="KW-0328">Glycosyltransferase</keyword>
<keyword id="KW-0441">Lipid A biosynthesis</keyword>
<keyword id="KW-0444">Lipid biosynthesis</keyword>
<keyword id="KW-0443">Lipid metabolism</keyword>
<keyword id="KW-0448">Lipopolysaccharide biosynthesis</keyword>
<keyword id="KW-0472">Membrane</keyword>
<keyword id="KW-0808">Transferase</keyword>
<keyword id="KW-0812">Transmembrane</keyword>
<keyword id="KW-1133">Transmembrane helix</keyword>
<name>ARNC_ECOLU</name>
<evidence type="ECO:0000255" key="1">
    <source>
        <dbReference type="HAMAP-Rule" id="MF_01164"/>
    </source>
</evidence>
<dbReference type="EC" id="2.4.2.53" evidence="1"/>
<dbReference type="EMBL" id="CU928163">
    <property type="protein sequence ID" value="CAR13778.1"/>
    <property type="molecule type" value="Genomic_DNA"/>
</dbReference>
<dbReference type="RefSeq" id="WP_000461642.1">
    <property type="nucleotide sequence ID" value="NC_011751.1"/>
</dbReference>
<dbReference type="RefSeq" id="YP_002413306.1">
    <property type="nucleotide sequence ID" value="NC_011751.1"/>
</dbReference>
<dbReference type="SMR" id="B7N5L9"/>
<dbReference type="STRING" id="585056.ECUMN_2595"/>
<dbReference type="CAZy" id="GT2">
    <property type="family name" value="Glycosyltransferase Family 2"/>
</dbReference>
<dbReference type="KEGG" id="eum:ECUMN_2595"/>
<dbReference type="PATRIC" id="fig|585056.7.peg.2776"/>
<dbReference type="HOGENOM" id="CLU_033536_0_0_6"/>
<dbReference type="UniPathway" id="UPA00030"/>
<dbReference type="UniPathway" id="UPA00036">
    <property type="reaction ID" value="UER00495"/>
</dbReference>
<dbReference type="Proteomes" id="UP000007097">
    <property type="component" value="Chromosome"/>
</dbReference>
<dbReference type="GO" id="GO:0005886">
    <property type="term" value="C:plasma membrane"/>
    <property type="evidence" value="ECO:0007669"/>
    <property type="project" value="UniProtKB-SubCell"/>
</dbReference>
<dbReference type="GO" id="GO:0016780">
    <property type="term" value="F:phosphotransferase activity, for other substituted phosphate groups"/>
    <property type="evidence" value="ECO:0007669"/>
    <property type="project" value="UniProtKB-UniRule"/>
</dbReference>
<dbReference type="GO" id="GO:0099621">
    <property type="term" value="F:undecaprenyl-phosphate 4-deoxy-4-formamido-L-arabinose transferase activity"/>
    <property type="evidence" value="ECO:0007669"/>
    <property type="project" value="UniProtKB-EC"/>
</dbReference>
<dbReference type="GO" id="GO:0036108">
    <property type="term" value="P:4-amino-4-deoxy-alpha-L-arabinopyranosyl undecaprenyl phosphate biosynthetic process"/>
    <property type="evidence" value="ECO:0007669"/>
    <property type="project" value="UniProtKB-UniRule"/>
</dbReference>
<dbReference type="GO" id="GO:0009245">
    <property type="term" value="P:lipid A biosynthetic process"/>
    <property type="evidence" value="ECO:0007669"/>
    <property type="project" value="UniProtKB-UniRule"/>
</dbReference>
<dbReference type="GO" id="GO:0009103">
    <property type="term" value="P:lipopolysaccharide biosynthetic process"/>
    <property type="evidence" value="ECO:0007669"/>
    <property type="project" value="UniProtKB-UniRule"/>
</dbReference>
<dbReference type="GO" id="GO:0046677">
    <property type="term" value="P:response to antibiotic"/>
    <property type="evidence" value="ECO:0007669"/>
    <property type="project" value="UniProtKB-KW"/>
</dbReference>
<dbReference type="CDD" id="cd04187">
    <property type="entry name" value="DPM1_like_bac"/>
    <property type="match status" value="1"/>
</dbReference>
<dbReference type="FunFam" id="3.90.550.10:FF:000019">
    <property type="entry name" value="Undecaprenyl-phosphate 4-deoxy-4-formamido-L-arabinose transferase"/>
    <property type="match status" value="1"/>
</dbReference>
<dbReference type="Gene3D" id="3.90.550.10">
    <property type="entry name" value="Spore Coat Polysaccharide Biosynthesis Protein SpsA, Chain A"/>
    <property type="match status" value="1"/>
</dbReference>
<dbReference type="HAMAP" id="MF_01164">
    <property type="entry name" value="ArnC_transfer"/>
    <property type="match status" value="1"/>
</dbReference>
<dbReference type="InterPro" id="IPR022857">
    <property type="entry name" value="ArnC_tfrase"/>
</dbReference>
<dbReference type="InterPro" id="IPR001173">
    <property type="entry name" value="Glyco_trans_2-like"/>
</dbReference>
<dbReference type="InterPro" id="IPR050256">
    <property type="entry name" value="Glycosyltransferase_2"/>
</dbReference>
<dbReference type="InterPro" id="IPR029044">
    <property type="entry name" value="Nucleotide-diphossugar_trans"/>
</dbReference>
<dbReference type="NCBIfam" id="NF007986">
    <property type="entry name" value="PRK10714.1"/>
    <property type="match status" value="1"/>
</dbReference>
<dbReference type="PANTHER" id="PTHR48090:SF3">
    <property type="entry name" value="UNDECAPRENYL-PHOSPHATE 4-DEOXY-4-FORMAMIDO-L-ARABINOSE TRANSFERASE"/>
    <property type="match status" value="1"/>
</dbReference>
<dbReference type="PANTHER" id="PTHR48090">
    <property type="entry name" value="UNDECAPRENYL-PHOSPHATE 4-DEOXY-4-FORMAMIDO-L-ARABINOSE TRANSFERASE-RELATED"/>
    <property type="match status" value="1"/>
</dbReference>
<dbReference type="Pfam" id="PF00535">
    <property type="entry name" value="Glycos_transf_2"/>
    <property type="match status" value="1"/>
</dbReference>
<dbReference type="SUPFAM" id="SSF53448">
    <property type="entry name" value="Nucleotide-diphospho-sugar transferases"/>
    <property type="match status" value="1"/>
</dbReference>
<protein>
    <recommendedName>
        <fullName evidence="1">Undecaprenyl-phosphate 4-deoxy-4-formamido-L-arabinose transferase</fullName>
        <ecNumber evidence="1">2.4.2.53</ecNumber>
    </recommendedName>
    <alternativeName>
        <fullName evidence="1">Undecaprenyl-phosphate Ara4FN transferase</fullName>
        <shortName evidence="1">Ara4FN transferase</shortName>
    </alternativeName>
</protein>
<organism>
    <name type="scientific">Escherichia coli O17:K52:H18 (strain UMN026 / ExPEC)</name>
    <dbReference type="NCBI Taxonomy" id="585056"/>
    <lineage>
        <taxon>Bacteria</taxon>
        <taxon>Pseudomonadati</taxon>
        <taxon>Pseudomonadota</taxon>
        <taxon>Gammaproteobacteria</taxon>
        <taxon>Enterobacterales</taxon>
        <taxon>Enterobacteriaceae</taxon>
        <taxon>Escherichia</taxon>
    </lineage>
</organism>
<comment type="function">
    <text evidence="1">Catalyzes the transfer of 4-deoxy-4-formamido-L-arabinose from UDP to undecaprenyl phosphate. The modified arabinose is attached to lipid A and is required for resistance to polymyxin and cationic antimicrobial peptides.</text>
</comment>
<comment type="catalytic activity">
    <reaction evidence="1">
        <text>UDP-4-deoxy-4-formamido-beta-L-arabinose + di-trans,octa-cis-undecaprenyl phosphate = 4-deoxy-4-formamido-alpha-L-arabinopyranosyl di-trans,octa-cis-undecaprenyl phosphate + UDP</text>
        <dbReference type="Rhea" id="RHEA:27722"/>
        <dbReference type="ChEBI" id="CHEBI:58223"/>
        <dbReference type="ChEBI" id="CHEBI:58709"/>
        <dbReference type="ChEBI" id="CHEBI:58909"/>
        <dbReference type="ChEBI" id="CHEBI:60392"/>
        <dbReference type="EC" id="2.4.2.53"/>
    </reaction>
</comment>
<comment type="pathway">
    <text evidence="1">Glycolipid biosynthesis; 4-amino-4-deoxy-alpha-L-arabinose undecaprenyl phosphate biosynthesis; 4-amino-4-deoxy-alpha-L-arabinose undecaprenyl phosphate from UDP-4-deoxy-4-formamido-beta-L-arabinose and undecaprenyl phosphate: step 1/2.</text>
</comment>
<comment type="pathway">
    <text evidence="1">Bacterial outer membrane biogenesis; lipopolysaccharide biosynthesis.</text>
</comment>
<comment type="subcellular location">
    <subcellularLocation>
        <location evidence="1">Cell inner membrane</location>
        <topology evidence="1">Multi-pass membrane protein</topology>
    </subcellularLocation>
</comment>
<comment type="similarity">
    <text evidence="1">Belongs to the glycosyltransferase 2 family.</text>
</comment>
<proteinExistence type="inferred from homology"/>
<feature type="chain" id="PRO_1000137912" description="Undecaprenyl-phosphate 4-deoxy-4-formamido-L-arabinose transferase">
    <location>
        <begin position="1"/>
        <end position="322"/>
    </location>
</feature>
<feature type="topological domain" description="Cytoplasmic" evidence="1">
    <location>
        <begin position="1"/>
        <end position="235"/>
    </location>
</feature>
<feature type="transmembrane region" description="Helical" evidence="1">
    <location>
        <begin position="236"/>
        <end position="256"/>
    </location>
</feature>
<feature type="topological domain" description="Periplasmic" evidence="1">
    <location>
        <begin position="257"/>
        <end position="269"/>
    </location>
</feature>
<feature type="transmembrane region" description="Helical" evidence="1">
    <location>
        <begin position="270"/>
        <end position="290"/>
    </location>
</feature>
<feature type="topological domain" description="Cytoplasmic" evidence="1">
    <location>
        <begin position="291"/>
        <end position="322"/>
    </location>
</feature>
<gene>
    <name evidence="1" type="primary">arnC</name>
    <name type="ordered locus">ECUMN_2595</name>
</gene>
<reference key="1">
    <citation type="journal article" date="2009" name="PLoS Genet.">
        <title>Organised genome dynamics in the Escherichia coli species results in highly diverse adaptive paths.</title>
        <authorList>
            <person name="Touchon M."/>
            <person name="Hoede C."/>
            <person name="Tenaillon O."/>
            <person name="Barbe V."/>
            <person name="Baeriswyl S."/>
            <person name="Bidet P."/>
            <person name="Bingen E."/>
            <person name="Bonacorsi S."/>
            <person name="Bouchier C."/>
            <person name="Bouvet O."/>
            <person name="Calteau A."/>
            <person name="Chiapello H."/>
            <person name="Clermont O."/>
            <person name="Cruveiller S."/>
            <person name="Danchin A."/>
            <person name="Diard M."/>
            <person name="Dossat C."/>
            <person name="Karoui M.E."/>
            <person name="Frapy E."/>
            <person name="Garry L."/>
            <person name="Ghigo J.M."/>
            <person name="Gilles A.M."/>
            <person name="Johnson J."/>
            <person name="Le Bouguenec C."/>
            <person name="Lescat M."/>
            <person name="Mangenot S."/>
            <person name="Martinez-Jehanne V."/>
            <person name="Matic I."/>
            <person name="Nassif X."/>
            <person name="Oztas S."/>
            <person name="Petit M.A."/>
            <person name="Pichon C."/>
            <person name="Rouy Z."/>
            <person name="Ruf C.S."/>
            <person name="Schneider D."/>
            <person name="Tourret J."/>
            <person name="Vacherie B."/>
            <person name="Vallenet D."/>
            <person name="Medigue C."/>
            <person name="Rocha E.P.C."/>
            <person name="Denamur E."/>
        </authorList>
    </citation>
    <scope>NUCLEOTIDE SEQUENCE [LARGE SCALE GENOMIC DNA]</scope>
    <source>
        <strain>UMN026 / ExPEC</strain>
    </source>
</reference>